<reference key="1">
    <citation type="journal article" date="2004" name="Nat. Biotechnol.">
        <title>The genome sequence of the capnophilic rumen bacterium Mannheimia succiniciproducens.</title>
        <authorList>
            <person name="Hong S.H."/>
            <person name="Kim J.S."/>
            <person name="Lee S.Y."/>
            <person name="In Y.H."/>
            <person name="Choi S.S."/>
            <person name="Rih J.-K."/>
            <person name="Kim C.H."/>
            <person name="Jeong H."/>
            <person name="Hur C.G."/>
            <person name="Kim J.J."/>
        </authorList>
    </citation>
    <scope>NUCLEOTIDE SEQUENCE [LARGE SCALE GENOMIC DNA]</scope>
    <source>
        <strain>KCTC 0769BP / MBEL55E</strain>
    </source>
</reference>
<proteinExistence type="inferred from homology"/>
<organism>
    <name type="scientific">Mannheimia succiniciproducens (strain KCTC 0769BP / MBEL55E)</name>
    <dbReference type="NCBI Taxonomy" id="221988"/>
    <lineage>
        <taxon>Bacteria</taxon>
        <taxon>Pseudomonadati</taxon>
        <taxon>Pseudomonadota</taxon>
        <taxon>Gammaproteobacteria</taxon>
        <taxon>Pasteurellales</taxon>
        <taxon>Pasteurellaceae</taxon>
        <taxon>Basfia</taxon>
    </lineage>
</organism>
<name>DCD_MANSM</name>
<sequence>MRLCDTDIERYLDEGIIEITPRPGNEKINGATIDLRLGNSFRVFRDYSAPYIDVSGPREEVSAQLDRVMSDEIIIRDDEPFFLHPGVLALATTLESVRLPDNIIGWLDGRSSLARLGLMVHVTAHRIDPGWEGRIVLEFYNSGKLPLALRPNMIIGALSFEILSNHAARPYNRRRDAKYKNQQSAVASRINQDE</sequence>
<comment type="function">
    <text evidence="1">Catalyzes the deamination of dCTP to dUTP.</text>
</comment>
<comment type="catalytic activity">
    <reaction evidence="1">
        <text>dCTP + H2O + H(+) = dUTP + NH4(+)</text>
        <dbReference type="Rhea" id="RHEA:22680"/>
        <dbReference type="ChEBI" id="CHEBI:15377"/>
        <dbReference type="ChEBI" id="CHEBI:15378"/>
        <dbReference type="ChEBI" id="CHEBI:28938"/>
        <dbReference type="ChEBI" id="CHEBI:61481"/>
        <dbReference type="ChEBI" id="CHEBI:61555"/>
        <dbReference type="EC" id="3.5.4.13"/>
    </reaction>
</comment>
<comment type="pathway">
    <text evidence="1">Pyrimidine metabolism; dUMP biosynthesis; dUMP from dCTP (dUTP route): step 1/2.</text>
</comment>
<comment type="subunit">
    <text evidence="1">Homotrimer.</text>
</comment>
<comment type="similarity">
    <text evidence="1">Belongs to the dCTP deaminase family.</text>
</comment>
<dbReference type="EC" id="3.5.4.13" evidence="1"/>
<dbReference type="EMBL" id="AE016827">
    <property type="protein sequence ID" value="AAU38188.1"/>
    <property type="molecule type" value="Genomic_DNA"/>
</dbReference>
<dbReference type="RefSeq" id="WP_011200752.1">
    <property type="nucleotide sequence ID" value="NC_006300.1"/>
</dbReference>
<dbReference type="SMR" id="Q65S72"/>
<dbReference type="STRING" id="221988.MS1581"/>
<dbReference type="KEGG" id="msu:MS1581"/>
<dbReference type="eggNOG" id="COG0717">
    <property type="taxonomic scope" value="Bacteria"/>
</dbReference>
<dbReference type="HOGENOM" id="CLU_087476_2_0_6"/>
<dbReference type="OrthoDB" id="9780956at2"/>
<dbReference type="UniPathway" id="UPA00610">
    <property type="reaction ID" value="UER00665"/>
</dbReference>
<dbReference type="Proteomes" id="UP000000607">
    <property type="component" value="Chromosome"/>
</dbReference>
<dbReference type="GO" id="GO:0008829">
    <property type="term" value="F:dCTP deaminase activity"/>
    <property type="evidence" value="ECO:0007669"/>
    <property type="project" value="UniProtKB-UniRule"/>
</dbReference>
<dbReference type="GO" id="GO:0000166">
    <property type="term" value="F:nucleotide binding"/>
    <property type="evidence" value="ECO:0007669"/>
    <property type="project" value="UniProtKB-KW"/>
</dbReference>
<dbReference type="GO" id="GO:0006226">
    <property type="term" value="P:dUMP biosynthetic process"/>
    <property type="evidence" value="ECO:0007669"/>
    <property type="project" value="UniProtKB-UniPathway"/>
</dbReference>
<dbReference type="GO" id="GO:0006229">
    <property type="term" value="P:dUTP biosynthetic process"/>
    <property type="evidence" value="ECO:0007669"/>
    <property type="project" value="UniProtKB-UniRule"/>
</dbReference>
<dbReference type="GO" id="GO:0015949">
    <property type="term" value="P:nucleobase-containing small molecule interconversion"/>
    <property type="evidence" value="ECO:0007669"/>
    <property type="project" value="TreeGrafter"/>
</dbReference>
<dbReference type="CDD" id="cd07557">
    <property type="entry name" value="trimeric_dUTPase"/>
    <property type="match status" value="1"/>
</dbReference>
<dbReference type="FunFam" id="2.70.40.10:FF:000003">
    <property type="entry name" value="dCTP deaminase"/>
    <property type="match status" value="1"/>
</dbReference>
<dbReference type="Gene3D" id="2.70.40.10">
    <property type="match status" value="1"/>
</dbReference>
<dbReference type="HAMAP" id="MF_00146">
    <property type="entry name" value="dCTP_deaminase"/>
    <property type="match status" value="1"/>
</dbReference>
<dbReference type="InterPro" id="IPR011962">
    <property type="entry name" value="dCTP_deaminase"/>
</dbReference>
<dbReference type="InterPro" id="IPR036157">
    <property type="entry name" value="dUTPase-like_sf"/>
</dbReference>
<dbReference type="InterPro" id="IPR033704">
    <property type="entry name" value="dUTPase_trimeric"/>
</dbReference>
<dbReference type="NCBIfam" id="TIGR02274">
    <property type="entry name" value="dCTP_deam"/>
    <property type="match status" value="1"/>
</dbReference>
<dbReference type="PANTHER" id="PTHR42680">
    <property type="entry name" value="DCTP DEAMINASE"/>
    <property type="match status" value="1"/>
</dbReference>
<dbReference type="PANTHER" id="PTHR42680:SF3">
    <property type="entry name" value="DCTP DEAMINASE"/>
    <property type="match status" value="1"/>
</dbReference>
<dbReference type="Pfam" id="PF22769">
    <property type="entry name" value="DCD"/>
    <property type="match status" value="1"/>
</dbReference>
<dbReference type="SUPFAM" id="SSF51283">
    <property type="entry name" value="dUTPase-like"/>
    <property type="match status" value="1"/>
</dbReference>
<protein>
    <recommendedName>
        <fullName evidence="1">dCTP deaminase</fullName>
        <ecNumber evidence="1">3.5.4.13</ecNumber>
    </recommendedName>
    <alternativeName>
        <fullName evidence="1">Deoxycytidine triphosphate deaminase</fullName>
    </alternativeName>
</protein>
<accession>Q65S72</accession>
<gene>
    <name evidence="1" type="primary">dcd</name>
    <name type="ordered locus">MS1581</name>
</gene>
<feature type="chain" id="PRO_1000009749" description="dCTP deaminase">
    <location>
        <begin position="1"/>
        <end position="194"/>
    </location>
</feature>
<feature type="active site" description="Proton donor/acceptor" evidence="1">
    <location>
        <position position="138"/>
    </location>
</feature>
<feature type="binding site" evidence="1">
    <location>
        <begin position="110"/>
        <end position="115"/>
    </location>
    <ligand>
        <name>dCTP</name>
        <dbReference type="ChEBI" id="CHEBI:61481"/>
    </ligand>
</feature>
<feature type="binding site" evidence="1">
    <location>
        <position position="128"/>
    </location>
    <ligand>
        <name>dCTP</name>
        <dbReference type="ChEBI" id="CHEBI:61481"/>
    </ligand>
</feature>
<feature type="binding site" evidence="1">
    <location>
        <begin position="136"/>
        <end position="138"/>
    </location>
    <ligand>
        <name>dCTP</name>
        <dbReference type="ChEBI" id="CHEBI:61481"/>
    </ligand>
</feature>
<feature type="binding site" evidence="1">
    <location>
        <position position="171"/>
    </location>
    <ligand>
        <name>dCTP</name>
        <dbReference type="ChEBI" id="CHEBI:61481"/>
    </ligand>
</feature>
<feature type="binding site" evidence="1">
    <location>
        <position position="178"/>
    </location>
    <ligand>
        <name>dCTP</name>
        <dbReference type="ChEBI" id="CHEBI:61481"/>
    </ligand>
</feature>
<feature type="binding site" evidence="1">
    <location>
        <position position="182"/>
    </location>
    <ligand>
        <name>dCTP</name>
        <dbReference type="ChEBI" id="CHEBI:61481"/>
    </ligand>
</feature>
<evidence type="ECO:0000255" key="1">
    <source>
        <dbReference type="HAMAP-Rule" id="MF_00146"/>
    </source>
</evidence>
<keyword id="KW-0378">Hydrolase</keyword>
<keyword id="KW-0546">Nucleotide metabolism</keyword>
<keyword id="KW-0547">Nucleotide-binding</keyword>